<protein>
    <recommendedName>
        <fullName>Protein PET117 homolog, mitochondrial</fullName>
    </recommendedName>
</protein>
<feature type="transit peptide" description="Mitochondrion" evidence="1">
    <location>
        <begin position="1"/>
        <end position="22"/>
    </location>
</feature>
<feature type="chain" id="PRO_0000416098" description="Protein PET117 homolog, mitochondrial">
    <location>
        <begin position="23"/>
        <end position="80"/>
    </location>
</feature>
<name>PT117_DANRE</name>
<dbReference type="EMBL" id="BX294165">
    <property type="protein sequence ID" value="CAK11341.1"/>
    <property type="status" value="ALT_SEQ"/>
    <property type="molecule type" value="Genomic_DNA"/>
</dbReference>
<dbReference type="SMR" id="E9QJ05"/>
<dbReference type="FunCoup" id="E9QJ05">
    <property type="interactions" value="82"/>
</dbReference>
<dbReference type="PeptideAtlas" id="E9QJ05"/>
<dbReference type="InParanoid" id="E9QJ05"/>
<dbReference type="Proteomes" id="UP000000437">
    <property type="component" value="Unplaced"/>
</dbReference>
<dbReference type="GO" id="GO:0005739">
    <property type="term" value="C:mitochondrion"/>
    <property type="evidence" value="ECO:0000250"/>
    <property type="project" value="UniProtKB"/>
</dbReference>
<dbReference type="GO" id="GO:0033617">
    <property type="term" value="P:mitochondrial cytochrome c oxidase assembly"/>
    <property type="evidence" value="ECO:0000318"/>
    <property type="project" value="GO_Central"/>
</dbReference>
<dbReference type="InterPro" id="IPR031568">
    <property type="entry name" value="Pet117"/>
</dbReference>
<dbReference type="PANTHER" id="PTHR28163">
    <property type="entry name" value="PROTEIN PET117 HOMOLOG, MITOCHONDRIAL"/>
    <property type="match status" value="1"/>
</dbReference>
<dbReference type="PANTHER" id="PTHR28163:SF1">
    <property type="entry name" value="PROTEIN PET117 HOMOLOG, MITOCHONDRIAL"/>
    <property type="match status" value="1"/>
</dbReference>
<dbReference type="Pfam" id="PF15786">
    <property type="entry name" value="PET117"/>
    <property type="match status" value="1"/>
</dbReference>
<reference key="1">
    <citation type="journal article" date="2013" name="Nature">
        <title>The zebrafish reference genome sequence and its relationship to the human genome.</title>
        <authorList>
            <person name="Howe K."/>
            <person name="Clark M.D."/>
            <person name="Torroja C.F."/>
            <person name="Torrance J."/>
            <person name="Berthelot C."/>
            <person name="Muffato M."/>
            <person name="Collins J.E."/>
            <person name="Humphray S."/>
            <person name="McLaren K."/>
            <person name="Matthews L."/>
            <person name="McLaren S."/>
            <person name="Sealy I."/>
            <person name="Caccamo M."/>
            <person name="Churcher C."/>
            <person name="Scott C."/>
            <person name="Barrett J.C."/>
            <person name="Koch R."/>
            <person name="Rauch G.J."/>
            <person name="White S."/>
            <person name="Chow W."/>
            <person name="Kilian B."/>
            <person name="Quintais L.T."/>
            <person name="Guerra-Assuncao J.A."/>
            <person name="Zhou Y."/>
            <person name="Gu Y."/>
            <person name="Yen J."/>
            <person name="Vogel J.H."/>
            <person name="Eyre T."/>
            <person name="Redmond S."/>
            <person name="Banerjee R."/>
            <person name="Chi J."/>
            <person name="Fu B."/>
            <person name="Langley E."/>
            <person name="Maguire S.F."/>
            <person name="Laird G.K."/>
            <person name="Lloyd D."/>
            <person name="Kenyon E."/>
            <person name="Donaldson S."/>
            <person name="Sehra H."/>
            <person name="Almeida-King J."/>
            <person name="Loveland J."/>
            <person name="Trevanion S."/>
            <person name="Jones M."/>
            <person name="Quail M."/>
            <person name="Willey D."/>
            <person name="Hunt A."/>
            <person name="Burton J."/>
            <person name="Sims S."/>
            <person name="McLay K."/>
            <person name="Plumb B."/>
            <person name="Davis J."/>
            <person name="Clee C."/>
            <person name="Oliver K."/>
            <person name="Clark R."/>
            <person name="Riddle C."/>
            <person name="Elliot D."/>
            <person name="Threadgold G."/>
            <person name="Harden G."/>
            <person name="Ware D."/>
            <person name="Begum S."/>
            <person name="Mortimore B."/>
            <person name="Kerry G."/>
            <person name="Heath P."/>
            <person name="Phillimore B."/>
            <person name="Tracey A."/>
            <person name="Corby N."/>
            <person name="Dunn M."/>
            <person name="Johnson C."/>
            <person name="Wood J."/>
            <person name="Clark S."/>
            <person name="Pelan S."/>
            <person name="Griffiths G."/>
            <person name="Smith M."/>
            <person name="Glithero R."/>
            <person name="Howden P."/>
            <person name="Barker N."/>
            <person name="Lloyd C."/>
            <person name="Stevens C."/>
            <person name="Harley J."/>
            <person name="Holt K."/>
            <person name="Panagiotidis G."/>
            <person name="Lovell J."/>
            <person name="Beasley H."/>
            <person name="Henderson C."/>
            <person name="Gordon D."/>
            <person name="Auger K."/>
            <person name="Wright D."/>
            <person name="Collins J."/>
            <person name="Raisen C."/>
            <person name="Dyer L."/>
            <person name="Leung K."/>
            <person name="Robertson L."/>
            <person name="Ambridge K."/>
            <person name="Leongamornlert D."/>
            <person name="McGuire S."/>
            <person name="Gilderthorp R."/>
            <person name="Griffiths C."/>
            <person name="Manthravadi D."/>
            <person name="Nichol S."/>
            <person name="Barker G."/>
            <person name="Whitehead S."/>
            <person name="Kay M."/>
            <person name="Brown J."/>
            <person name="Murnane C."/>
            <person name="Gray E."/>
            <person name="Humphries M."/>
            <person name="Sycamore N."/>
            <person name="Barker D."/>
            <person name="Saunders D."/>
            <person name="Wallis J."/>
            <person name="Babbage A."/>
            <person name="Hammond S."/>
            <person name="Mashreghi-Mohammadi M."/>
            <person name="Barr L."/>
            <person name="Martin S."/>
            <person name="Wray P."/>
            <person name="Ellington A."/>
            <person name="Matthews N."/>
            <person name="Ellwood M."/>
            <person name="Woodmansey R."/>
            <person name="Clark G."/>
            <person name="Cooper J."/>
            <person name="Tromans A."/>
            <person name="Grafham D."/>
            <person name="Skuce C."/>
            <person name="Pandian R."/>
            <person name="Andrews R."/>
            <person name="Harrison E."/>
            <person name="Kimberley A."/>
            <person name="Garnett J."/>
            <person name="Fosker N."/>
            <person name="Hall R."/>
            <person name="Garner P."/>
            <person name="Kelly D."/>
            <person name="Bird C."/>
            <person name="Palmer S."/>
            <person name="Gehring I."/>
            <person name="Berger A."/>
            <person name="Dooley C.M."/>
            <person name="Ersan-Urun Z."/>
            <person name="Eser C."/>
            <person name="Geiger H."/>
            <person name="Geisler M."/>
            <person name="Karotki L."/>
            <person name="Kirn A."/>
            <person name="Konantz J."/>
            <person name="Konantz M."/>
            <person name="Oberlander M."/>
            <person name="Rudolph-Geiger S."/>
            <person name="Teucke M."/>
            <person name="Lanz C."/>
            <person name="Raddatz G."/>
            <person name="Osoegawa K."/>
            <person name="Zhu B."/>
            <person name="Rapp A."/>
            <person name="Widaa S."/>
            <person name="Langford C."/>
            <person name="Yang F."/>
            <person name="Schuster S.C."/>
            <person name="Carter N.P."/>
            <person name="Harrow J."/>
            <person name="Ning Z."/>
            <person name="Herrero J."/>
            <person name="Searle S.M."/>
            <person name="Enright A."/>
            <person name="Geisler R."/>
            <person name="Plasterk R.H."/>
            <person name="Lee C."/>
            <person name="Westerfield M."/>
            <person name="de Jong P.J."/>
            <person name="Zon L.I."/>
            <person name="Postlethwait J.H."/>
            <person name="Nusslein-Volhard C."/>
            <person name="Hubbard T.J."/>
            <person name="Roest Crollius H."/>
            <person name="Rogers J."/>
            <person name="Stemple D.L."/>
        </authorList>
    </citation>
    <scope>NUCLEOTIDE SEQUENCE [LARGE SCALE GENOMIC DNA]</scope>
    <source>
        <strain>Tuebingen</strain>
    </source>
</reference>
<keyword id="KW-0496">Mitochondrion</keyword>
<keyword id="KW-1185">Reference proteome</keyword>
<keyword id="KW-0809">Transit peptide</keyword>
<evidence type="ECO:0000255" key="1"/>
<evidence type="ECO:0000305" key="2"/>
<accession>E9QJ05</accession>
<accession>Q1LXR4</accession>
<sequence>MSTASKVVLGLSIVLTISTVAGVHIKQNWDRQRLREGVVRDLERLERKRENLRALEEQIQLTRELVTERNRRQAEASETH</sequence>
<organism>
    <name type="scientific">Danio rerio</name>
    <name type="common">Zebrafish</name>
    <name type="synonym">Brachydanio rerio</name>
    <dbReference type="NCBI Taxonomy" id="7955"/>
    <lineage>
        <taxon>Eukaryota</taxon>
        <taxon>Metazoa</taxon>
        <taxon>Chordata</taxon>
        <taxon>Craniata</taxon>
        <taxon>Vertebrata</taxon>
        <taxon>Euteleostomi</taxon>
        <taxon>Actinopterygii</taxon>
        <taxon>Neopterygii</taxon>
        <taxon>Teleostei</taxon>
        <taxon>Ostariophysi</taxon>
        <taxon>Cypriniformes</taxon>
        <taxon>Danionidae</taxon>
        <taxon>Danioninae</taxon>
        <taxon>Danio</taxon>
    </lineage>
</organism>
<proteinExistence type="inferred from homology"/>
<comment type="subcellular location">
    <subcellularLocation>
        <location evidence="2">Mitochondrion</location>
    </subcellularLocation>
</comment>
<comment type="similarity">
    <text evidence="2">Belongs to the PET117 family.</text>
</comment>
<comment type="sequence caution" evidence="2">
    <conflict type="erroneous gene model prediction">
        <sequence resource="EMBL-CDS" id="CAK11341"/>
    </conflict>
</comment>
<gene>
    <name type="primary">pet117</name>
    <name type="ORF">si:dkeyp-20e4.6</name>
</gene>